<dbReference type="EMBL" id="U00089">
    <property type="protein sequence ID" value="AAB96100.1"/>
    <property type="molecule type" value="Genomic_DNA"/>
</dbReference>
<dbReference type="PIR" id="S73778">
    <property type="entry name" value="S73778"/>
</dbReference>
<dbReference type="RefSeq" id="NP_110073.1">
    <property type="nucleotide sequence ID" value="NC_000912.1"/>
</dbReference>
<dbReference type="RefSeq" id="WP_010874741.1">
    <property type="nucleotide sequence ID" value="NZ_OU342337.1"/>
</dbReference>
<dbReference type="SMR" id="P75397"/>
<dbReference type="STRING" id="272634.MPN_385"/>
<dbReference type="EnsemblBacteria" id="AAB96100">
    <property type="protein sequence ID" value="AAB96100"/>
    <property type="gene ID" value="MPN_385"/>
</dbReference>
<dbReference type="KEGG" id="mpn:MPN_385"/>
<dbReference type="PATRIC" id="fig|272634.6.peg.416"/>
<dbReference type="HOGENOM" id="CLU_2118372_0_0_14"/>
<dbReference type="OrthoDB" id="9971745at2"/>
<dbReference type="BioCyc" id="MPNE272634:G1GJ3-612-MONOMER"/>
<dbReference type="Proteomes" id="UP000000808">
    <property type="component" value="Chromosome"/>
</dbReference>
<dbReference type="GO" id="GO:0005886">
    <property type="term" value="C:plasma membrane"/>
    <property type="evidence" value="ECO:0007669"/>
    <property type="project" value="UniProtKB-SubCell"/>
</dbReference>
<dbReference type="InterPro" id="IPR054989">
    <property type="entry name" value="MPN454_MG319"/>
</dbReference>
<dbReference type="NCBIfam" id="NF045751">
    <property type="entry name" value="MPN385"/>
    <property type="match status" value="1"/>
</dbReference>
<dbReference type="NCBIfam" id="NF045771">
    <property type="entry name" value="MPN454_MG319"/>
    <property type="match status" value="1"/>
</dbReference>
<protein>
    <recommendedName>
        <fullName>Uncharacterized protein MG267 homolog</fullName>
    </recommendedName>
</protein>
<gene>
    <name type="ordered locus">MPN_385</name>
    <name type="ORF">F11_orf114</name>
    <name type="ORF">MP452</name>
</gene>
<name>Y385_MYCPN</name>
<keyword id="KW-1003">Cell membrane</keyword>
<keyword id="KW-0472">Membrane</keyword>
<keyword id="KW-1185">Reference proteome</keyword>
<keyword id="KW-0812">Transmembrane</keyword>
<keyword id="KW-1133">Transmembrane helix</keyword>
<evidence type="ECO:0000255" key="1"/>
<evidence type="ECO:0000305" key="2"/>
<sequence>MLLKRLIKLAIFLFFVAVGFIIFIGSFWLNTYNTKEWANLLAEKDASGLIVQIIPNINQWFKGTVEQQQKLFQTLVHFFIPVGFGLLFGIAVAIIADLFYHLIKYLIKRSFKKN</sequence>
<organism>
    <name type="scientific">Mycoplasma pneumoniae (strain ATCC 29342 / M129 / Subtype 1)</name>
    <name type="common">Mycoplasmoides pneumoniae</name>
    <dbReference type="NCBI Taxonomy" id="272634"/>
    <lineage>
        <taxon>Bacteria</taxon>
        <taxon>Bacillati</taxon>
        <taxon>Mycoplasmatota</taxon>
        <taxon>Mycoplasmoidales</taxon>
        <taxon>Mycoplasmoidaceae</taxon>
        <taxon>Mycoplasmoides</taxon>
    </lineage>
</organism>
<feature type="chain" id="PRO_0000210495" description="Uncharacterized protein MG267 homolog">
    <location>
        <begin position="1"/>
        <end position="114"/>
    </location>
</feature>
<feature type="transmembrane region" description="Helical" evidence="1">
    <location>
        <begin position="9"/>
        <end position="29"/>
    </location>
</feature>
<feature type="transmembrane region" description="Helical" evidence="1">
    <location>
        <begin position="75"/>
        <end position="95"/>
    </location>
</feature>
<accession>P75397</accession>
<reference key="1">
    <citation type="journal article" date="1996" name="Nucleic Acids Res.">
        <title>Complete sequence analysis of the genome of the bacterium Mycoplasma pneumoniae.</title>
        <authorList>
            <person name="Himmelreich R."/>
            <person name="Hilbert H."/>
            <person name="Plagens H."/>
            <person name="Pirkl E."/>
            <person name="Li B.-C."/>
            <person name="Herrmann R."/>
        </authorList>
    </citation>
    <scope>NUCLEOTIDE SEQUENCE [LARGE SCALE GENOMIC DNA]</scope>
    <source>
        <strain>ATCC 29342 / M129 / Subtype 1</strain>
    </source>
</reference>
<comment type="subcellular location">
    <subcellularLocation>
        <location evidence="2">Cell membrane</location>
        <topology evidence="2">Multi-pass membrane protein</topology>
    </subcellularLocation>
</comment>
<proteinExistence type="predicted"/>